<protein>
    <recommendedName>
        <fullName evidence="1">Uroporphyrinogen decarboxylase</fullName>
        <shortName evidence="1">UPD</shortName>
        <shortName evidence="1">URO-D</shortName>
        <ecNumber evidence="1">4.1.1.37</ecNumber>
    </recommendedName>
</protein>
<reference key="1">
    <citation type="journal article" date="2004" name="Proc. Natl. Acad. Sci. U.S.A.">
        <title>Complete genomes of two clinical Staphylococcus aureus strains: evidence for the rapid evolution of virulence and drug resistance.</title>
        <authorList>
            <person name="Holden M.T.G."/>
            <person name="Feil E.J."/>
            <person name="Lindsay J.A."/>
            <person name="Peacock S.J."/>
            <person name="Day N.P.J."/>
            <person name="Enright M.C."/>
            <person name="Foster T.J."/>
            <person name="Moore C.E."/>
            <person name="Hurst L."/>
            <person name="Atkin R."/>
            <person name="Barron A."/>
            <person name="Bason N."/>
            <person name="Bentley S.D."/>
            <person name="Chillingworth C."/>
            <person name="Chillingworth T."/>
            <person name="Churcher C."/>
            <person name="Clark L."/>
            <person name="Corton C."/>
            <person name="Cronin A."/>
            <person name="Doggett J."/>
            <person name="Dowd L."/>
            <person name="Feltwell T."/>
            <person name="Hance Z."/>
            <person name="Harris B."/>
            <person name="Hauser H."/>
            <person name="Holroyd S."/>
            <person name="Jagels K."/>
            <person name="James K.D."/>
            <person name="Lennard N."/>
            <person name="Line A."/>
            <person name="Mayes R."/>
            <person name="Moule S."/>
            <person name="Mungall K."/>
            <person name="Ormond D."/>
            <person name="Quail M.A."/>
            <person name="Rabbinowitsch E."/>
            <person name="Rutherford K.M."/>
            <person name="Sanders M."/>
            <person name="Sharp S."/>
            <person name="Simmonds M."/>
            <person name="Stevens K."/>
            <person name="Whitehead S."/>
            <person name="Barrell B.G."/>
            <person name="Spratt B.G."/>
            <person name="Parkhill J."/>
        </authorList>
    </citation>
    <scope>NUCLEOTIDE SEQUENCE [LARGE SCALE GENOMIC DNA]</scope>
    <source>
        <strain>MRSA252</strain>
    </source>
</reference>
<sequence length="345" mass="39294">MVHNKNNTILKMIKGEETTHTPVWFMRQAGRSQPEYRKLKEKYSLFDITHQPELCAYVTHLPVDNYHTDAAILYKDIMTPLKPIGVDVEIKSGIGPVIHNPIKTIQDVEKLSQIDPERDVPYVLDTIKLLTEEKLNVPLIGFTGAPFTLASYMIEGGPSKNYNFTKAMMYRDEATWFALMNHLVDVSVKYVTAQVEAGAELIQIFDSWVGALNVEDYRRYIKPHMIRLISEVKEKHDVPVILFGVGASHLINEWNDLPIDVLGLDWRTSINQAQQLGVTKTLQGNLDPSILLAPWNVIEERLKPILDQGMENGKHIFNLGHGVFPEVQPETLRKVSGFVHTYTQR</sequence>
<comment type="function">
    <text evidence="1">Catalyzes the decarboxylation of four acetate groups of uroporphyrinogen-III to yield coproporphyrinogen-III.</text>
</comment>
<comment type="catalytic activity">
    <reaction evidence="1">
        <text>uroporphyrinogen III + 4 H(+) = coproporphyrinogen III + 4 CO2</text>
        <dbReference type="Rhea" id="RHEA:19865"/>
        <dbReference type="ChEBI" id="CHEBI:15378"/>
        <dbReference type="ChEBI" id="CHEBI:16526"/>
        <dbReference type="ChEBI" id="CHEBI:57308"/>
        <dbReference type="ChEBI" id="CHEBI:57309"/>
        <dbReference type="EC" id="4.1.1.37"/>
    </reaction>
</comment>
<comment type="pathway">
    <text evidence="1">Porphyrin-containing compound metabolism; protoporphyrin-IX biosynthesis; coproporphyrinogen-III from 5-aminolevulinate: step 4/4.</text>
</comment>
<comment type="subunit">
    <text evidence="1">Homodimer.</text>
</comment>
<comment type="subcellular location">
    <subcellularLocation>
        <location evidence="1">Cytoplasm</location>
    </subcellularLocation>
</comment>
<comment type="similarity">
    <text evidence="1">Belongs to the uroporphyrinogen decarboxylase family.</text>
</comment>
<organism>
    <name type="scientific">Staphylococcus aureus (strain MRSA252)</name>
    <dbReference type="NCBI Taxonomy" id="282458"/>
    <lineage>
        <taxon>Bacteria</taxon>
        <taxon>Bacillati</taxon>
        <taxon>Bacillota</taxon>
        <taxon>Bacilli</taxon>
        <taxon>Bacillales</taxon>
        <taxon>Staphylococcaceae</taxon>
        <taxon>Staphylococcus</taxon>
    </lineage>
</organism>
<keyword id="KW-0963">Cytoplasm</keyword>
<keyword id="KW-0210">Decarboxylase</keyword>
<keyword id="KW-0456">Lyase</keyword>
<keyword id="KW-0627">Porphyrin biosynthesis</keyword>
<accession>Q6GFM3</accession>
<feature type="chain" id="PRO_0000187642" description="Uroporphyrinogen decarboxylase">
    <location>
        <begin position="1"/>
        <end position="345"/>
    </location>
</feature>
<feature type="binding site" evidence="1">
    <location>
        <begin position="27"/>
        <end position="31"/>
    </location>
    <ligand>
        <name>substrate</name>
    </ligand>
</feature>
<feature type="binding site" evidence="1">
    <location>
        <position position="46"/>
    </location>
    <ligand>
        <name>substrate</name>
    </ligand>
</feature>
<feature type="binding site" evidence="1">
    <location>
        <position position="76"/>
    </location>
    <ligand>
        <name>substrate</name>
    </ligand>
</feature>
<feature type="binding site" evidence="1">
    <location>
        <position position="152"/>
    </location>
    <ligand>
        <name>substrate</name>
    </ligand>
</feature>
<feature type="binding site" evidence="1">
    <location>
        <position position="207"/>
    </location>
    <ligand>
        <name>substrate</name>
    </ligand>
</feature>
<feature type="binding site" evidence="1">
    <location>
        <position position="321"/>
    </location>
    <ligand>
        <name>substrate</name>
    </ligand>
</feature>
<feature type="site" description="Transition state stabilizer" evidence="1">
    <location>
        <position position="76"/>
    </location>
</feature>
<proteinExistence type="inferred from homology"/>
<evidence type="ECO:0000255" key="1">
    <source>
        <dbReference type="HAMAP-Rule" id="MF_00218"/>
    </source>
</evidence>
<dbReference type="EC" id="4.1.1.37" evidence="1"/>
<dbReference type="EMBL" id="BX571856">
    <property type="protein sequence ID" value="CAG40911.1"/>
    <property type="molecule type" value="Genomic_DNA"/>
</dbReference>
<dbReference type="RefSeq" id="WP_000233541.1">
    <property type="nucleotide sequence ID" value="NC_002952.2"/>
</dbReference>
<dbReference type="SMR" id="Q6GFM3"/>
<dbReference type="KEGG" id="sar:SAR1925"/>
<dbReference type="HOGENOM" id="CLU_040933_0_1_9"/>
<dbReference type="UniPathway" id="UPA00251">
    <property type="reaction ID" value="UER00321"/>
</dbReference>
<dbReference type="Proteomes" id="UP000000596">
    <property type="component" value="Chromosome"/>
</dbReference>
<dbReference type="GO" id="GO:0005829">
    <property type="term" value="C:cytosol"/>
    <property type="evidence" value="ECO:0007669"/>
    <property type="project" value="TreeGrafter"/>
</dbReference>
<dbReference type="GO" id="GO:0004853">
    <property type="term" value="F:uroporphyrinogen decarboxylase activity"/>
    <property type="evidence" value="ECO:0007669"/>
    <property type="project" value="UniProtKB-UniRule"/>
</dbReference>
<dbReference type="GO" id="GO:0006782">
    <property type="term" value="P:protoporphyrinogen IX biosynthetic process"/>
    <property type="evidence" value="ECO:0007669"/>
    <property type="project" value="UniProtKB-UniRule"/>
</dbReference>
<dbReference type="CDD" id="cd00717">
    <property type="entry name" value="URO-D"/>
    <property type="match status" value="1"/>
</dbReference>
<dbReference type="FunFam" id="3.20.20.210:FF:000005">
    <property type="entry name" value="Uroporphyrinogen decarboxylase"/>
    <property type="match status" value="1"/>
</dbReference>
<dbReference type="Gene3D" id="3.20.20.210">
    <property type="match status" value="1"/>
</dbReference>
<dbReference type="HAMAP" id="MF_00218">
    <property type="entry name" value="URO_D"/>
    <property type="match status" value="1"/>
</dbReference>
<dbReference type="InterPro" id="IPR038071">
    <property type="entry name" value="UROD/MetE-like_sf"/>
</dbReference>
<dbReference type="InterPro" id="IPR006361">
    <property type="entry name" value="Uroporphyrinogen_deCO2ase_HemE"/>
</dbReference>
<dbReference type="InterPro" id="IPR000257">
    <property type="entry name" value="Uroporphyrinogen_deCOase"/>
</dbReference>
<dbReference type="NCBIfam" id="TIGR01464">
    <property type="entry name" value="hemE"/>
    <property type="match status" value="1"/>
</dbReference>
<dbReference type="PANTHER" id="PTHR21091">
    <property type="entry name" value="METHYLTETRAHYDROFOLATE:HOMOCYSTEINE METHYLTRANSFERASE RELATED"/>
    <property type="match status" value="1"/>
</dbReference>
<dbReference type="PANTHER" id="PTHR21091:SF169">
    <property type="entry name" value="UROPORPHYRINOGEN DECARBOXYLASE"/>
    <property type="match status" value="1"/>
</dbReference>
<dbReference type="Pfam" id="PF01208">
    <property type="entry name" value="URO-D"/>
    <property type="match status" value="1"/>
</dbReference>
<dbReference type="SUPFAM" id="SSF51726">
    <property type="entry name" value="UROD/MetE-like"/>
    <property type="match status" value="1"/>
</dbReference>
<dbReference type="PROSITE" id="PS00906">
    <property type="entry name" value="UROD_1"/>
    <property type="match status" value="1"/>
</dbReference>
<dbReference type="PROSITE" id="PS00907">
    <property type="entry name" value="UROD_2"/>
    <property type="match status" value="1"/>
</dbReference>
<name>DCUP_STAAR</name>
<gene>
    <name evidence="1" type="primary">hemE</name>
    <name type="ordered locus">SAR1925</name>
</gene>